<accession>Q9NWS8</accession>
<accession>A8K8H4</accession>
<accession>Q0VDG6</accession>
<accession>Q5SZ48</accession>
<accession>Q5SZ83</accession>
<accession>Q6NSC5</accession>
<accession>Q96EN7</accession>
<gene>
    <name type="primary">RMND1</name>
    <name type="synonym">C6orf96</name>
</gene>
<keyword id="KW-0025">Alternative splicing</keyword>
<keyword id="KW-0225">Disease variant</keyword>
<keyword id="KW-0496">Mitochondrion</keyword>
<keyword id="KW-1274">Primary mitochondrial disease</keyword>
<keyword id="KW-0648">Protein biosynthesis</keyword>
<keyword id="KW-1267">Proteomics identification</keyword>
<keyword id="KW-1185">Reference proteome</keyword>
<keyword id="KW-0809">Transit peptide</keyword>
<comment type="function">
    <text evidence="4 6">Required for mitochondrial translation, possibly by coordinating the assembly or maintenance of the mitochondrial ribosome (PubMed:23022098, PubMed:25604853).</text>
</comment>
<comment type="subunit">
    <text evidence="4 6">Homooligomer (PubMed:23022098, PubMed:25604853).</text>
</comment>
<comment type="interaction">
    <interactant intactId="EBI-4401316">
        <id>Q9NWS8</id>
    </interactant>
    <interactant intactId="EBI-296550">
        <id>Q96KC8</id>
        <label>DNAJC1</label>
    </interactant>
    <organismsDiffer>false</organismsDiffer>
    <experiments>2</experiments>
</comment>
<comment type="interaction">
    <interactant intactId="EBI-4401316">
        <id>Q9NWS8</id>
    </interactant>
    <interactant intactId="EBI-10175124">
        <id>Q8IZU0</id>
        <label>FAM9B</label>
    </interactant>
    <organismsDiffer>false</organismsDiffer>
    <experiments>3</experiments>
</comment>
<comment type="interaction">
    <interactant intactId="EBI-4401316">
        <id>Q9NWS8</id>
    </interactant>
    <interactant intactId="EBI-3907241">
        <id>Q8NCL4</id>
        <label>GALNT6</label>
    </interactant>
    <organismsDiffer>false</organismsDiffer>
    <experiments>4</experiments>
</comment>
<comment type="interaction">
    <interactant intactId="EBI-25884400">
        <id>Q9NWS8-3</id>
    </interactant>
    <interactant intactId="EBI-399080">
        <id>Q92993</id>
        <label>KAT5</label>
    </interactant>
    <organismsDiffer>false</organismsDiffer>
    <experiments>3</experiments>
</comment>
<comment type="interaction">
    <interactant intactId="EBI-25884400">
        <id>Q9NWS8-3</id>
    </interactant>
    <interactant intactId="EBI-11742507">
        <id>Q8TAP4-4</id>
        <label>LMO3</label>
    </interactant>
    <organismsDiffer>false</organismsDiffer>
    <experiments>3</experiments>
</comment>
<comment type="interaction">
    <interactant intactId="EBI-25884400">
        <id>Q9NWS8-3</id>
    </interactant>
    <interactant intactId="EBI-359252">
        <id>P23284</id>
        <label>PPIB</label>
    </interactant>
    <organismsDiffer>false</organismsDiffer>
    <experiments>3</experiments>
</comment>
<comment type="interaction">
    <interactant intactId="EBI-25884400">
        <id>Q9NWS8-3</id>
    </interactant>
    <interactant intactId="EBI-1383528">
        <id>P17252</id>
        <label>PRKCA</label>
    </interactant>
    <organismsDiffer>false</organismsDiffer>
    <experiments>3</experiments>
</comment>
<comment type="interaction">
    <interactant intactId="EBI-25884400">
        <id>Q9NWS8-3</id>
    </interactant>
    <interactant intactId="EBI-9090795">
        <id>Q15047-2</id>
        <label>SETDB1</label>
    </interactant>
    <organismsDiffer>false</organismsDiffer>
    <experiments>3</experiments>
</comment>
<comment type="interaction">
    <interactant intactId="EBI-25884400">
        <id>Q9NWS8-3</id>
    </interactant>
    <interactant intactId="EBI-359832">
        <id>P61981</id>
        <label>YWHAG</label>
    </interactant>
    <organismsDiffer>false</organismsDiffer>
    <experiments>3</experiments>
</comment>
<comment type="subcellular location">
    <subcellularLocation>
        <location evidence="4 5 6">Mitochondrion</location>
    </subcellularLocation>
    <text evidence="6">May be localized in mitochondrial RNA granules (PubMed:25604853).</text>
</comment>
<comment type="alternative products">
    <event type="alternative splicing"/>
    <isoform>
        <id>Q9NWS8-1</id>
        <name>1</name>
        <sequence type="displayed"/>
    </isoform>
    <isoform>
        <id>Q9NWS8-2</id>
        <name>2</name>
        <sequence type="described" ref="VSP_017735"/>
    </isoform>
    <isoform>
        <id>Q9NWS8-3</id>
        <name>3</name>
        <sequence type="described" ref="VSP_017738 VSP_017739"/>
    </isoform>
</comment>
<comment type="disease" evidence="4 5 6 7">
    <disease id="DI-03566">
        <name>Combined oxidative phosphorylation deficiency 11</name>
        <acronym>COXPD11</acronym>
        <description>A severe, multisystemic, autosomal recessive, disorder characterized by deficiencies of multiple mitochondrial respiratory enzymes leading to neonatal hypotonia and lactic acidosis. Affected individuals may have respiratory insufficiency, foot deformities, or seizures.</description>
        <dbReference type="MIM" id="614922"/>
    </disease>
    <text>The disease is caused by variants affecting the gene represented in this entry.</text>
</comment>
<comment type="similarity">
    <text evidence="9">Belongs to the RMD1/sif2 family.</text>
</comment>
<dbReference type="EMBL" id="AK000634">
    <property type="protein sequence ID" value="BAA91299.1"/>
    <property type="molecule type" value="mRNA"/>
</dbReference>
<dbReference type="EMBL" id="AK292339">
    <property type="protein sequence ID" value="BAF85028.1"/>
    <property type="molecule type" value="mRNA"/>
</dbReference>
<dbReference type="EMBL" id="AL590413">
    <property type="status" value="NOT_ANNOTATED_CDS"/>
    <property type="molecule type" value="Genomic_DNA"/>
</dbReference>
<dbReference type="EMBL" id="AL590543">
    <property type="status" value="NOT_ANNOTATED_CDS"/>
    <property type="molecule type" value="Genomic_DNA"/>
</dbReference>
<dbReference type="EMBL" id="CH471051">
    <property type="protein sequence ID" value="EAW47747.1"/>
    <property type="molecule type" value="Genomic_DNA"/>
</dbReference>
<dbReference type="EMBL" id="BC012081">
    <property type="protein sequence ID" value="AAH12081.1"/>
    <property type="molecule type" value="mRNA"/>
</dbReference>
<dbReference type="EMBL" id="BC106065">
    <property type="protein sequence ID" value="AAI06066.1"/>
    <property type="molecule type" value="mRNA"/>
</dbReference>
<dbReference type="EMBL" id="BC119683">
    <property type="protein sequence ID" value="AAI19684.1"/>
    <property type="molecule type" value="mRNA"/>
</dbReference>
<dbReference type="CCDS" id="CCDS5232.1">
    <molecule id="Q9NWS8-1"/>
</dbReference>
<dbReference type="RefSeq" id="NP_001258866.1">
    <property type="nucleotide sequence ID" value="NM_001271937.1"/>
</dbReference>
<dbReference type="RefSeq" id="NP_060379.2">
    <molecule id="Q9NWS8-1"/>
    <property type="nucleotide sequence ID" value="NM_017909.4"/>
</dbReference>
<dbReference type="RefSeq" id="XP_005267097.1">
    <property type="nucleotide sequence ID" value="XM_005267040.3"/>
</dbReference>
<dbReference type="RefSeq" id="XP_016866477.1">
    <property type="nucleotide sequence ID" value="XM_017010988.1"/>
</dbReference>
<dbReference type="RefSeq" id="XP_047274915.1">
    <molecule id="Q9NWS8-1"/>
    <property type="nucleotide sequence ID" value="XM_047418959.1"/>
</dbReference>
<dbReference type="BioGRID" id="120337">
    <property type="interactions" value="201"/>
</dbReference>
<dbReference type="FunCoup" id="Q9NWS8">
    <property type="interactions" value="1337"/>
</dbReference>
<dbReference type="IntAct" id="Q9NWS8">
    <property type="interactions" value="78"/>
</dbReference>
<dbReference type="STRING" id="9606.ENSP00000412708"/>
<dbReference type="GlyGen" id="Q9NWS8">
    <property type="glycosylation" value="1 site, 1 O-linked glycan (1 site)"/>
</dbReference>
<dbReference type="iPTMnet" id="Q9NWS8"/>
<dbReference type="PhosphoSitePlus" id="Q9NWS8"/>
<dbReference type="SwissPalm" id="Q9NWS8"/>
<dbReference type="BioMuta" id="RMND1"/>
<dbReference type="DMDM" id="91208248"/>
<dbReference type="jPOST" id="Q9NWS8"/>
<dbReference type="MassIVE" id="Q9NWS8"/>
<dbReference type="PaxDb" id="9606-ENSP00000356272"/>
<dbReference type="PeptideAtlas" id="Q9NWS8"/>
<dbReference type="ProteomicsDB" id="82973">
    <molecule id="Q9NWS8-1"/>
</dbReference>
<dbReference type="ProteomicsDB" id="82974">
    <molecule id="Q9NWS8-2"/>
</dbReference>
<dbReference type="ProteomicsDB" id="82975">
    <molecule id="Q9NWS8-3"/>
</dbReference>
<dbReference type="Pumba" id="Q9NWS8"/>
<dbReference type="Antibodypedia" id="33335">
    <property type="antibodies" value="90 antibodies from 19 providers"/>
</dbReference>
<dbReference type="DNASU" id="55005"/>
<dbReference type="Ensembl" id="ENST00000444024.3">
    <molecule id="Q9NWS8-1"/>
    <property type="protein sequence ID" value="ENSP00000412708.2"/>
    <property type="gene ID" value="ENSG00000155906.20"/>
</dbReference>
<dbReference type="Ensembl" id="ENST00000491268.2">
    <molecule id="Q9NWS8-3"/>
    <property type="protein sequence ID" value="ENSP00000494948.1"/>
    <property type="gene ID" value="ENSG00000155906.20"/>
</dbReference>
<dbReference type="Ensembl" id="ENST00000683724.1">
    <molecule id="Q9NWS8-1"/>
    <property type="protein sequence ID" value="ENSP00000507984.1"/>
    <property type="gene ID" value="ENSG00000155906.20"/>
</dbReference>
<dbReference type="Ensembl" id="ENST00000684301.1">
    <molecule id="Q9NWS8-3"/>
    <property type="protein sequence ID" value="ENSP00000507824.1"/>
    <property type="gene ID" value="ENSG00000155906.20"/>
</dbReference>
<dbReference type="GeneID" id="55005"/>
<dbReference type="KEGG" id="hsa:55005"/>
<dbReference type="MANE-Select" id="ENST00000444024.3">
    <property type="protein sequence ID" value="ENSP00000412708.2"/>
    <property type="RefSeq nucleotide sequence ID" value="NM_017909.4"/>
    <property type="RefSeq protein sequence ID" value="NP_060379.2"/>
</dbReference>
<dbReference type="UCSC" id="uc003qoi.4">
    <molecule id="Q9NWS8-1"/>
    <property type="organism name" value="human"/>
</dbReference>
<dbReference type="AGR" id="HGNC:21176"/>
<dbReference type="CTD" id="55005"/>
<dbReference type="DisGeNET" id="55005"/>
<dbReference type="GeneCards" id="RMND1"/>
<dbReference type="HGNC" id="HGNC:21176">
    <property type="gene designation" value="RMND1"/>
</dbReference>
<dbReference type="HPA" id="ENSG00000155906">
    <property type="expression patterns" value="Low tissue specificity"/>
</dbReference>
<dbReference type="MalaCards" id="RMND1"/>
<dbReference type="MIM" id="614917">
    <property type="type" value="gene"/>
</dbReference>
<dbReference type="MIM" id="614922">
    <property type="type" value="phenotype"/>
</dbReference>
<dbReference type="neXtProt" id="NX_Q9NWS8"/>
<dbReference type="OpenTargets" id="ENSG00000155906"/>
<dbReference type="Orphanet" id="324535">
    <property type="disease" value="Combined oxidative phosphorylation defect type 11"/>
</dbReference>
<dbReference type="Orphanet" id="642945">
    <property type="disease" value="Perrault syndrome type 1"/>
</dbReference>
<dbReference type="Orphanet" id="642976">
    <property type="disease" value="Perrault syndrome type 2"/>
</dbReference>
<dbReference type="PharmGKB" id="PA162401372"/>
<dbReference type="VEuPathDB" id="HostDB:ENSG00000155906"/>
<dbReference type="eggNOG" id="KOG2861">
    <property type="taxonomic scope" value="Eukaryota"/>
</dbReference>
<dbReference type="GeneTree" id="ENSGT00390000013337"/>
<dbReference type="HOGENOM" id="CLU_011220_4_0_1"/>
<dbReference type="InParanoid" id="Q9NWS8"/>
<dbReference type="OMA" id="KLGMWEA"/>
<dbReference type="OrthoDB" id="242766at2759"/>
<dbReference type="PAN-GO" id="Q9NWS8">
    <property type="GO annotations" value="1 GO annotation based on evolutionary models"/>
</dbReference>
<dbReference type="PhylomeDB" id="Q9NWS8"/>
<dbReference type="TreeFam" id="TF105813"/>
<dbReference type="PathwayCommons" id="Q9NWS8"/>
<dbReference type="SignaLink" id="Q9NWS8"/>
<dbReference type="BioGRID-ORCS" id="55005">
    <property type="hits" value="92 hits in 1156 CRISPR screens"/>
</dbReference>
<dbReference type="ChiTaRS" id="RMND1">
    <property type="organism name" value="human"/>
</dbReference>
<dbReference type="GenomeRNAi" id="55005"/>
<dbReference type="Pharos" id="Q9NWS8">
    <property type="development level" value="Tbio"/>
</dbReference>
<dbReference type="PRO" id="PR:Q9NWS8"/>
<dbReference type="Proteomes" id="UP000005640">
    <property type="component" value="Chromosome 6"/>
</dbReference>
<dbReference type="RNAct" id="Q9NWS8">
    <property type="molecule type" value="protein"/>
</dbReference>
<dbReference type="Bgee" id="ENSG00000155906">
    <property type="expression patterns" value="Expressed in primordial germ cell in gonad and 195 other cell types or tissues"/>
</dbReference>
<dbReference type="ExpressionAtlas" id="Q9NWS8">
    <property type="expression patterns" value="baseline and differential"/>
</dbReference>
<dbReference type="GO" id="GO:0005739">
    <property type="term" value="C:mitochondrion"/>
    <property type="evidence" value="ECO:0000314"/>
    <property type="project" value="HPA"/>
</dbReference>
<dbReference type="GO" id="GO:0070131">
    <property type="term" value="P:positive regulation of mitochondrial translation"/>
    <property type="evidence" value="ECO:0000314"/>
    <property type="project" value="UniProtKB"/>
</dbReference>
<dbReference type="GO" id="GO:0006412">
    <property type="term" value="P:translation"/>
    <property type="evidence" value="ECO:0007669"/>
    <property type="project" value="UniProtKB-KW"/>
</dbReference>
<dbReference type="InterPro" id="IPR003734">
    <property type="entry name" value="DUF155"/>
</dbReference>
<dbReference type="InterPro" id="IPR051624">
    <property type="entry name" value="RMD1/Sad1-interacting"/>
</dbReference>
<dbReference type="PANTHER" id="PTHR16255">
    <property type="entry name" value="REQUIRED FOR MEIOTIC NUCLEAR DIVISION PROTEIN 1 HOMOLOG"/>
    <property type="match status" value="1"/>
</dbReference>
<dbReference type="PANTHER" id="PTHR16255:SF1">
    <property type="entry name" value="REQUIRED FOR MEIOTIC NUCLEAR DIVISION PROTEIN 1 HOMOLOG"/>
    <property type="match status" value="1"/>
</dbReference>
<dbReference type="Pfam" id="PF02582">
    <property type="entry name" value="DUF155"/>
    <property type="match status" value="1"/>
</dbReference>
<organism>
    <name type="scientific">Homo sapiens</name>
    <name type="common">Human</name>
    <dbReference type="NCBI Taxonomy" id="9606"/>
    <lineage>
        <taxon>Eukaryota</taxon>
        <taxon>Metazoa</taxon>
        <taxon>Chordata</taxon>
        <taxon>Craniata</taxon>
        <taxon>Vertebrata</taxon>
        <taxon>Euteleostomi</taxon>
        <taxon>Mammalia</taxon>
        <taxon>Eutheria</taxon>
        <taxon>Euarchontoglires</taxon>
        <taxon>Primates</taxon>
        <taxon>Haplorrhini</taxon>
        <taxon>Catarrhini</taxon>
        <taxon>Hominidae</taxon>
        <taxon>Homo</taxon>
    </lineage>
</organism>
<protein>
    <recommendedName>
        <fullName>Required for meiotic nuclear division protein 1 homolog</fullName>
    </recommendedName>
</protein>
<reference key="1">
    <citation type="journal article" date="2004" name="Nat. Genet.">
        <title>Complete sequencing and characterization of 21,243 full-length human cDNAs.</title>
        <authorList>
            <person name="Ota T."/>
            <person name="Suzuki Y."/>
            <person name="Nishikawa T."/>
            <person name="Otsuki T."/>
            <person name="Sugiyama T."/>
            <person name="Irie R."/>
            <person name="Wakamatsu A."/>
            <person name="Hayashi K."/>
            <person name="Sato H."/>
            <person name="Nagai K."/>
            <person name="Kimura K."/>
            <person name="Makita H."/>
            <person name="Sekine M."/>
            <person name="Obayashi M."/>
            <person name="Nishi T."/>
            <person name="Shibahara T."/>
            <person name="Tanaka T."/>
            <person name="Ishii S."/>
            <person name="Yamamoto J."/>
            <person name="Saito K."/>
            <person name="Kawai Y."/>
            <person name="Isono Y."/>
            <person name="Nakamura Y."/>
            <person name="Nagahari K."/>
            <person name="Murakami K."/>
            <person name="Yasuda T."/>
            <person name="Iwayanagi T."/>
            <person name="Wagatsuma M."/>
            <person name="Shiratori A."/>
            <person name="Sudo H."/>
            <person name="Hosoiri T."/>
            <person name="Kaku Y."/>
            <person name="Kodaira H."/>
            <person name="Kondo H."/>
            <person name="Sugawara M."/>
            <person name="Takahashi M."/>
            <person name="Kanda K."/>
            <person name="Yokoi T."/>
            <person name="Furuya T."/>
            <person name="Kikkawa E."/>
            <person name="Omura Y."/>
            <person name="Abe K."/>
            <person name="Kamihara K."/>
            <person name="Katsuta N."/>
            <person name="Sato K."/>
            <person name="Tanikawa M."/>
            <person name="Yamazaki M."/>
            <person name="Ninomiya K."/>
            <person name="Ishibashi T."/>
            <person name="Yamashita H."/>
            <person name="Murakawa K."/>
            <person name="Fujimori K."/>
            <person name="Tanai H."/>
            <person name="Kimata M."/>
            <person name="Watanabe M."/>
            <person name="Hiraoka S."/>
            <person name="Chiba Y."/>
            <person name="Ishida S."/>
            <person name="Ono Y."/>
            <person name="Takiguchi S."/>
            <person name="Watanabe S."/>
            <person name="Yosida M."/>
            <person name="Hotuta T."/>
            <person name="Kusano J."/>
            <person name="Kanehori K."/>
            <person name="Takahashi-Fujii A."/>
            <person name="Hara H."/>
            <person name="Tanase T.-O."/>
            <person name="Nomura Y."/>
            <person name="Togiya S."/>
            <person name="Komai F."/>
            <person name="Hara R."/>
            <person name="Takeuchi K."/>
            <person name="Arita M."/>
            <person name="Imose N."/>
            <person name="Musashino K."/>
            <person name="Yuuki H."/>
            <person name="Oshima A."/>
            <person name="Sasaki N."/>
            <person name="Aotsuka S."/>
            <person name="Yoshikawa Y."/>
            <person name="Matsunawa H."/>
            <person name="Ichihara T."/>
            <person name="Shiohata N."/>
            <person name="Sano S."/>
            <person name="Moriya S."/>
            <person name="Momiyama H."/>
            <person name="Satoh N."/>
            <person name="Takami S."/>
            <person name="Terashima Y."/>
            <person name="Suzuki O."/>
            <person name="Nakagawa S."/>
            <person name="Senoh A."/>
            <person name="Mizoguchi H."/>
            <person name="Goto Y."/>
            <person name="Shimizu F."/>
            <person name="Wakebe H."/>
            <person name="Hishigaki H."/>
            <person name="Watanabe T."/>
            <person name="Sugiyama A."/>
            <person name="Takemoto M."/>
            <person name="Kawakami B."/>
            <person name="Yamazaki M."/>
            <person name="Watanabe K."/>
            <person name="Kumagai A."/>
            <person name="Itakura S."/>
            <person name="Fukuzumi Y."/>
            <person name="Fujimori Y."/>
            <person name="Komiyama M."/>
            <person name="Tashiro H."/>
            <person name="Tanigami A."/>
            <person name="Fujiwara T."/>
            <person name="Ono T."/>
            <person name="Yamada K."/>
            <person name="Fujii Y."/>
            <person name="Ozaki K."/>
            <person name="Hirao M."/>
            <person name="Ohmori Y."/>
            <person name="Kawabata A."/>
            <person name="Hikiji T."/>
            <person name="Kobatake N."/>
            <person name="Inagaki H."/>
            <person name="Ikema Y."/>
            <person name="Okamoto S."/>
            <person name="Okitani R."/>
            <person name="Kawakami T."/>
            <person name="Noguchi S."/>
            <person name="Itoh T."/>
            <person name="Shigeta K."/>
            <person name="Senba T."/>
            <person name="Matsumura K."/>
            <person name="Nakajima Y."/>
            <person name="Mizuno T."/>
            <person name="Morinaga M."/>
            <person name="Sasaki M."/>
            <person name="Togashi T."/>
            <person name="Oyama M."/>
            <person name="Hata H."/>
            <person name="Watanabe M."/>
            <person name="Komatsu T."/>
            <person name="Mizushima-Sugano J."/>
            <person name="Satoh T."/>
            <person name="Shirai Y."/>
            <person name="Takahashi Y."/>
            <person name="Nakagawa K."/>
            <person name="Okumura K."/>
            <person name="Nagase T."/>
            <person name="Nomura N."/>
            <person name="Kikuchi H."/>
            <person name="Masuho Y."/>
            <person name="Yamashita R."/>
            <person name="Nakai K."/>
            <person name="Yada T."/>
            <person name="Nakamura Y."/>
            <person name="Ohara O."/>
            <person name="Isogai T."/>
            <person name="Sugano S."/>
        </authorList>
    </citation>
    <scope>NUCLEOTIDE SEQUENCE [LARGE SCALE MRNA] (ISOFORM 1)</scope>
    <scope>VARIANT MET-132</scope>
    <source>
        <tissue>Signet-ring cell carcinoma</tissue>
        <tissue>Testis</tissue>
    </source>
</reference>
<reference key="2">
    <citation type="journal article" date="2003" name="Nature">
        <title>The DNA sequence and analysis of human chromosome 6.</title>
        <authorList>
            <person name="Mungall A.J."/>
            <person name="Palmer S.A."/>
            <person name="Sims S.K."/>
            <person name="Edwards C.A."/>
            <person name="Ashurst J.L."/>
            <person name="Wilming L."/>
            <person name="Jones M.C."/>
            <person name="Horton R."/>
            <person name="Hunt S.E."/>
            <person name="Scott C.E."/>
            <person name="Gilbert J.G.R."/>
            <person name="Clamp M.E."/>
            <person name="Bethel G."/>
            <person name="Milne S."/>
            <person name="Ainscough R."/>
            <person name="Almeida J.P."/>
            <person name="Ambrose K.D."/>
            <person name="Andrews T.D."/>
            <person name="Ashwell R.I.S."/>
            <person name="Babbage A.K."/>
            <person name="Bagguley C.L."/>
            <person name="Bailey J."/>
            <person name="Banerjee R."/>
            <person name="Barker D.J."/>
            <person name="Barlow K.F."/>
            <person name="Bates K."/>
            <person name="Beare D.M."/>
            <person name="Beasley H."/>
            <person name="Beasley O."/>
            <person name="Bird C.P."/>
            <person name="Blakey S.E."/>
            <person name="Bray-Allen S."/>
            <person name="Brook J."/>
            <person name="Brown A.J."/>
            <person name="Brown J.Y."/>
            <person name="Burford D.C."/>
            <person name="Burrill W."/>
            <person name="Burton J."/>
            <person name="Carder C."/>
            <person name="Carter N.P."/>
            <person name="Chapman J.C."/>
            <person name="Clark S.Y."/>
            <person name="Clark G."/>
            <person name="Clee C.M."/>
            <person name="Clegg S."/>
            <person name="Cobley V."/>
            <person name="Collier R.E."/>
            <person name="Collins J.E."/>
            <person name="Colman L.K."/>
            <person name="Corby N.R."/>
            <person name="Coville G.J."/>
            <person name="Culley K.M."/>
            <person name="Dhami P."/>
            <person name="Davies J."/>
            <person name="Dunn M."/>
            <person name="Earthrowl M.E."/>
            <person name="Ellington A.E."/>
            <person name="Evans K.A."/>
            <person name="Faulkner L."/>
            <person name="Francis M.D."/>
            <person name="Frankish A."/>
            <person name="Frankland J."/>
            <person name="French L."/>
            <person name="Garner P."/>
            <person name="Garnett J."/>
            <person name="Ghori M.J."/>
            <person name="Gilby L.M."/>
            <person name="Gillson C.J."/>
            <person name="Glithero R.J."/>
            <person name="Grafham D.V."/>
            <person name="Grant M."/>
            <person name="Gribble S."/>
            <person name="Griffiths C."/>
            <person name="Griffiths M.N.D."/>
            <person name="Hall R."/>
            <person name="Halls K.S."/>
            <person name="Hammond S."/>
            <person name="Harley J.L."/>
            <person name="Hart E.A."/>
            <person name="Heath P.D."/>
            <person name="Heathcott R."/>
            <person name="Holmes S.J."/>
            <person name="Howden P.J."/>
            <person name="Howe K.L."/>
            <person name="Howell G.R."/>
            <person name="Huckle E."/>
            <person name="Humphray S.J."/>
            <person name="Humphries M.D."/>
            <person name="Hunt A.R."/>
            <person name="Johnson C.M."/>
            <person name="Joy A.A."/>
            <person name="Kay M."/>
            <person name="Keenan S.J."/>
            <person name="Kimberley A.M."/>
            <person name="King A."/>
            <person name="Laird G.K."/>
            <person name="Langford C."/>
            <person name="Lawlor S."/>
            <person name="Leongamornlert D.A."/>
            <person name="Leversha M."/>
            <person name="Lloyd C.R."/>
            <person name="Lloyd D.M."/>
            <person name="Loveland J.E."/>
            <person name="Lovell J."/>
            <person name="Martin S."/>
            <person name="Mashreghi-Mohammadi M."/>
            <person name="Maslen G.L."/>
            <person name="Matthews L."/>
            <person name="McCann O.T."/>
            <person name="McLaren S.J."/>
            <person name="McLay K."/>
            <person name="McMurray A."/>
            <person name="Moore M.J.F."/>
            <person name="Mullikin J.C."/>
            <person name="Niblett D."/>
            <person name="Nickerson T."/>
            <person name="Novik K.L."/>
            <person name="Oliver K."/>
            <person name="Overton-Larty E.K."/>
            <person name="Parker A."/>
            <person name="Patel R."/>
            <person name="Pearce A.V."/>
            <person name="Peck A.I."/>
            <person name="Phillimore B.J.C.T."/>
            <person name="Phillips S."/>
            <person name="Plumb R.W."/>
            <person name="Porter K.M."/>
            <person name="Ramsey Y."/>
            <person name="Ranby S.A."/>
            <person name="Rice C.M."/>
            <person name="Ross M.T."/>
            <person name="Searle S.M."/>
            <person name="Sehra H.K."/>
            <person name="Sheridan E."/>
            <person name="Skuce C.D."/>
            <person name="Smith S."/>
            <person name="Smith M."/>
            <person name="Spraggon L."/>
            <person name="Squares S.L."/>
            <person name="Steward C.A."/>
            <person name="Sycamore N."/>
            <person name="Tamlyn-Hall G."/>
            <person name="Tester J."/>
            <person name="Theaker A.J."/>
            <person name="Thomas D.W."/>
            <person name="Thorpe A."/>
            <person name="Tracey A."/>
            <person name="Tromans A."/>
            <person name="Tubby B."/>
            <person name="Wall M."/>
            <person name="Wallis J.M."/>
            <person name="West A.P."/>
            <person name="White S.S."/>
            <person name="Whitehead S.L."/>
            <person name="Whittaker H."/>
            <person name="Wild A."/>
            <person name="Willey D.J."/>
            <person name="Wilmer T.E."/>
            <person name="Wood J.M."/>
            <person name="Wray P.W."/>
            <person name="Wyatt J.C."/>
            <person name="Young L."/>
            <person name="Younger R.M."/>
            <person name="Bentley D.R."/>
            <person name="Coulson A."/>
            <person name="Durbin R.M."/>
            <person name="Hubbard T."/>
            <person name="Sulston J.E."/>
            <person name="Dunham I."/>
            <person name="Rogers J."/>
            <person name="Beck S."/>
        </authorList>
    </citation>
    <scope>NUCLEOTIDE SEQUENCE [LARGE SCALE GENOMIC DNA]</scope>
</reference>
<reference key="3">
    <citation type="submission" date="2005-09" db="EMBL/GenBank/DDBJ databases">
        <authorList>
            <person name="Mural R.J."/>
            <person name="Istrail S."/>
            <person name="Sutton G.G."/>
            <person name="Florea L."/>
            <person name="Halpern A.L."/>
            <person name="Mobarry C.M."/>
            <person name="Lippert R."/>
            <person name="Walenz B."/>
            <person name="Shatkay H."/>
            <person name="Dew I."/>
            <person name="Miller J.R."/>
            <person name="Flanigan M.J."/>
            <person name="Edwards N.J."/>
            <person name="Bolanos R."/>
            <person name="Fasulo D."/>
            <person name="Halldorsson B.V."/>
            <person name="Hannenhalli S."/>
            <person name="Turner R."/>
            <person name="Yooseph S."/>
            <person name="Lu F."/>
            <person name="Nusskern D.R."/>
            <person name="Shue B.C."/>
            <person name="Zheng X.H."/>
            <person name="Zhong F."/>
            <person name="Delcher A.L."/>
            <person name="Huson D.H."/>
            <person name="Kravitz S.A."/>
            <person name="Mouchard L."/>
            <person name="Reinert K."/>
            <person name="Remington K.A."/>
            <person name="Clark A.G."/>
            <person name="Waterman M.S."/>
            <person name="Eichler E.E."/>
            <person name="Adams M.D."/>
            <person name="Hunkapiller M.W."/>
            <person name="Myers E.W."/>
            <person name="Venter J.C."/>
        </authorList>
    </citation>
    <scope>NUCLEOTIDE SEQUENCE [LARGE SCALE GENOMIC DNA]</scope>
</reference>
<reference key="4">
    <citation type="journal article" date="2004" name="Genome Res.">
        <title>The status, quality, and expansion of the NIH full-length cDNA project: the Mammalian Gene Collection (MGC).</title>
        <authorList>
            <consortium name="The MGC Project Team"/>
        </authorList>
    </citation>
    <scope>NUCLEOTIDE SEQUENCE [LARGE SCALE MRNA] (ISOFORMS 1 AND 3)</scope>
    <scope>VARIANT MET-132</scope>
    <source>
        <tissue>Kidney</tissue>
        <tissue>Skin</tissue>
    </source>
</reference>
<reference key="5">
    <citation type="journal article" date="2011" name="BMC Syst. Biol.">
        <title>Initial characterization of the human central proteome.</title>
        <authorList>
            <person name="Burkard T.R."/>
            <person name="Planyavsky M."/>
            <person name="Kaupe I."/>
            <person name="Breitwieser F.P."/>
            <person name="Buerckstuemmer T."/>
            <person name="Bennett K.L."/>
            <person name="Superti-Furga G."/>
            <person name="Colinge J."/>
        </authorList>
    </citation>
    <scope>IDENTIFICATION BY MASS SPECTROMETRY [LARGE SCALE ANALYSIS]</scope>
</reference>
<reference key="6">
    <citation type="journal article" date="2012" name="Am. J. Hum. Genet.">
        <title>Infantile encephaloneuromyopathy and defective mitochondrial translation are due to a homozygous RMND1 mutation.</title>
        <authorList>
            <person name="Garcia-Diaz B."/>
            <person name="Barros M.H."/>
            <person name="Sanna-Cherchi S."/>
            <person name="Emmanuele V."/>
            <person name="Akman H.O."/>
            <person name="Ferreiro-Barros C.C."/>
            <person name="Horvath R."/>
            <person name="Tadesse S."/>
            <person name="El Gharaby N."/>
            <person name="DiMauro S."/>
            <person name="De Vivo D.C."/>
            <person name="Shokr A."/>
            <person name="Hirano M."/>
            <person name="Quinzii C.M."/>
        </authorList>
    </citation>
    <scope>INVOLVEMENT IN COXPD11</scope>
    <scope>SUBCELLULAR LOCATION</scope>
</reference>
<reference key="7">
    <citation type="journal article" date="2014" name="J. Proteomics">
        <title>An enzyme assisted RP-RPLC approach for in-depth analysis of human liver phosphoproteome.</title>
        <authorList>
            <person name="Bian Y."/>
            <person name="Song C."/>
            <person name="Cheng K."/>
            <person name="Dong M."/>
            <person name="Wang F."/>
            <person name="Huang J."/>
            <person name="Sun D."/>
            <person name="Wang L."/>
            <person name="Ye M."/>
            <person name="Zou H."/>
        </authorList>
    </citation>
    <scope>IDENTIFICATION BY MASS SPECTROMETRY [LARGE SCALE ANALYSIS]</scope>
    <source>
        <tissue>Liver</tissue>
    </source>
</reference>
<reference key="8">
    <citation type="journal article" date="2015" name="Eur. J. Hum. Genet.">
        <title>RMND1 deficiency associated with neonatal lactic acidosis, infantile onset renal failure, deafness, and multiorgan involvement.</title>
        <authorList>
            <person name="Janer A."/>
            <person name="van Karnebeek C.D."/>
            <person name="Sasarman F."/>
            <person name="Antonicka H."/>
            <person name="Al Ghamdi M."/>
            <person name="Shyr C."/>
            <person name="Dunbar M."/>
            <person name="Stockler-Ispiroglu S."/>
            <person name="Ross C.J."/>
            <person name="Vallance H."/>
            <person name="Dionne J."/>
            <person name="Wasserman W.W."/>
            <person name="Shoubridge E.A."/>
        </authorList>
    </citation>
    <scope>FUNCTION</scope>
    <scope>SUBUNIT</scope>
    <scope>SUBCELLULAR LOCATION</scope>
    <scope>CHARACTERIZATION OF VARIANT COXPD11 GLN-417</scope>
</reference>
<reference key="9">
    <citation type="journal article" date="2015" name="Proteomics">
        <title>N-terminome analysis of the human mitochondrial proteome.</title>
        <authorList>
            <person name="Vaca Jacome A.S."/>
            <person name="Rabilloud T."/>
            <person name="Schaeffer-Reiss C."/>
            <person name="Rompais M."/>
            <person name="Ayoub D."/>
            <person name="Lane L."/>
            <person name="Bairoch A."/>
            <person name="Van Dorsselaer A."/>
            <person name="Carapito C."/>
        </authorList>
    </citation>
    <scope>IDENTIFICATION BY MASS SPECTROMETRY [LARGE SCALE ANALYSIS]</scope>
</reference>
<reference key="10">
    <citation type="journal article" date="2012" name="Am. J. Hum. Genet.">
        <title>An RMND1 Mutation causes encephalopathy associated with multiple oxidative phosphorylation complex deficiencies and a mitochondrial translation defect.</title>
        <authorList>
            <person name="Janer A."/>
            <person name="Antonicka H."/>
            <person name="Lalonde E."/>
            <person name="Nishimura T."/>
            <person name="Sasarman F."/>
            <person name="Brown G.K."/>
            <person name="Brown R.M."/>
            <person name="Majewski J."/>
            <person name="Shoubridge E.A."/>
        </authorList>
    </citation>
    <scope>VARIANT COXPD11 GLN-417</scope>
    <scope>FUNCTION</scope>
    <scope>HOMOPOLYMERIZATION</scope>
    <scope>SUBCELLULAR LOCATION</scope>
</reference>
<reference key="11">
    <citation type="journal article" date="2016" name="JIMD Rep.">
        <title>Periventricular Calcification, Abnormal Pterins and Dry Thickened Skin: expanding the clinical spectrum of RMND1?</title>
        <authorList>
            <person name="Casey J.P."/>
            <person name="Crushell E."/>
            <person name="Thompson K."/>
            <person name="Twomey E."/>
            <person name="He L."/>
            <person name="Ennis S."/>
            <person name="Philip R.K."/>
            <person name="Taylor R.W."/>
            <person name="King M.D."/>
            <person name="Lynch S.A."/>
        </authorList>
    </citation>
    <scope>VARIANT COXPD11 GLN-417</scope>
</reference>
<feature type="transit peptide" description="Mitochondrion" evidence="1">
    <location>
        <begin position="1"/>
        <end position="12"/>
    </location>
</feature>
<feature type="chain" id="PRO_0000229732" description="Required for meiotic nuclear division protein 1 homolog">
    <location>
        <begin position="13"/>
        <end position="449"/>
    </location>
</feature>
<feature type="splice variant" id="VSP_017735" description="In isoform 2." evidence="9">
    <location>
        <begin position="1"/>
        <end position="211"/>
    </location>
</feature>
<feature type="splice variant" id="VSP_017738" description="In isoform 3." evidence="8">
    <original>DAAN</original>
    <variation>GTSS</variation>
    <location>
        <begin position="205"/>
        <end position="208"/>
    </location>
</feature>
<feature type="splice variant" id="VSP_017739" description="In isoform 3." evidence="8">
    <location>
        <begin position="209"/>
        <end position="449"/>
    </location>
</feature>
<feature type="sequence variant" id="VAR_051864" description="In dbSNP:rs11550103.">
    <original>S</original>
    <variation>I</variation>
    <location>
        <position position="42"/>
    </location>
</feature>
<feature type="sequence variant" id="VAR_051865" description="In dbSNP:rs6934360.">
    <original>R</original>
    <variation>H</variation>
    <location>
        <position position="47"/>
    </location>
</feature>
<feature type="sequence variant" id="VAR_025754" description="In dbSNP:rs3734800." evidence="2 3">
    <original>T</original>
    <variation>M</variation>
    <location>
        <position position="132"/>
    </location>
</feature>
<feature type="sequence variant" id="VAR_069036" description="In COXPD11; alters homooligomeric formation of the protein; decreases the levels of mitochondrial protein synthesis; dbSNP:rs397515421." evidence="4 6 7">
    <original>R</original>
    <variation>Q</variation>
    <location>
        <position position="417"/>
    </location>
</feature>
<feature type="sequence conflict" description="In Ref. 1; BAA91299." evidence="9" ref="1">
    <original>L</original>
    <variation>P</variation>
    <location>
        <position position="170"/>
    </location>
</feature>
<proteinExistence type="evidence at protein level"/>
<sequence length="449" mass="51604">MPATLLRAVARSHHILSKAHQCRRIGHLMLKPLKEFENTTCSTLTIRQSLDLFLPDKTASGLNKSQILEMNQKKSDTSMLSPLNAARCQDEKAHLPTMKSFGTHRRVTHKPNLLGSKWFIKILKRHFSSVSTETFVPKQDFPQVKRPLKASRTRQPSRTNLPVLSVNEDLMHCTAFATADEYHLGNLSQDLASHGYVEVTSLPRDAANILVMGVENSAKEGDPGTIFFFREGAAVFWNVKDKTMKHVMKVLEKHEIQPYEIALVHWENEELNYIKIEGQSKLHRGEIKLNSELDLDDAILEKFAFSNALCLSVKLAIWEASLDKFIESIQSIPEALKAGKKVKLSHEEVMQKIGELFALRHRINLSSDFLITPDFYWDRENLEGLYDKTCQFLSIGRRVKVMNEKLQHCMELTDLMRNHLNEKRALRLEWMIVILITIEVMFELGRVFF</sequence>
<name>RMND1_HUMAN</name>
<evidence type="ECO:0000255" key="1"/>
<evidence type="ECO:0000269" key="2">
    <source>
    </source>
</evidence>
<evidence type="ECO:0000269" key="3">
    <source>
    </source>
</evidence>
<evidence type="ECO:0000269" key="4">
    <source>
    </source>
</evidence>
<evidence type="ECO:0000269" key="5">
    <source>
    </source>
</evidence>
<evidence type="ECO:0000269" key="6">
    <source>
    </source>
</evidence>
<evidence type="ECO:0000269" key="7">
    <source>
    </source>
</evidence>
<evidence type="ECO:0000303" key="8">
    <source>
    </source>
</evidence>
<evidence type="ECO:0000305" key="9"/>